<proteinExistence type="inferred from homology"/>
<feature type="chain" id="PRO_0000162604" description="Period circadian protein">
    <location>
        <begin position="1" status="less than"/>
        <end position="396" status="greater than"/>
    </location>
</feature>
<feature type="region of interest" description="Disordered" evidence="2">
    <location>
        <begin position="27"/>
        <end position="120"/>
    </location>
</feature>
<feature type="region of interest" description="Disordered" evidence="2">
    <location>
        <begin position="164"/>
        <end position="188"/>
    </location>
</feature>
<feature type="region of interest" description="Disordered" evidence="2">
    <location>
        <begin position="253"/>
        <end position="273"/>
    </location>
</feature>
<feature type="region of interest" description="Disordered" evidence="2">
    <location>
        <begin position="333"/>
        <end position="362"/>
    </location>
</feature>
<feature type="compositionally biased region" description="Gly residues" evidence="2">
    <location>
        <begin position="93"/>
        <end position="114"/>
    </location>
</feature>
<feature type="compositionally biased region" description="Gly residues" evidence="2">
    <location>
        <begin position="253"/>
        <end position="262"/>
    </location>
</feature>
<feature type="compositionally biased region" description="Low complexity" evidence="2">
    <location>
        <begin position="333"/>
        <end position="342"/>
    </location>
</feature>
<feature type="non-terminal residue">
    <location>
        <position position="1"/>
    </location>
</feature>
<feature type="non-terminal residue">
    <location>
        <position position="396"/>
    </location>
</feature>
<reference key="1">
    <citation type="journal article" date="1997" name="Mol. Biol. Evol.">
        <title>Interspecific and intraspecific comparisons of the period locus in the Drosophila willistoni sibling species.</title>
        <authorList>
            <person name="Gleason J.M."/>
            <person name="Powell J.R."/>
        </authorList>
    </citation>
    <scope>NUCLEOTIDE SEQUENCE [GENOMIC DNA]</scope>
    <source>
        <strain>P1 Georgetown / Guyana</strain>
    </source>
</reference>
<name>PER_DROPV</name>
<comment type="function">
    <text evidence="1">Essential for biological clock functions. Determines the period length of circadian and ultradian rhythms; an increase in PER dosage leads to shortened circadian rhythms and a decrease leads to lengthened circadian rhythms. Essential for the circadian rhythmicity of locomotor activity, eclosion behavior, and for the rhythmic component of the male courtship song that originates in the thoracic nervous system. The biological cycle depends on the rhythmic formation and nuclear localization of the TIM-PER complex. Light induces the degradation of TIM, which promotes elimination of PER. Nuclear activity of the heterodimer coordinatively regulates PER and TIM transcription through a negative feedback loop. Behaves as a negative element in circadian transcriptional loop. Does not appear to bind DNA, suggesting indirect transcriptional inhibition (By similarity).</text>
</comment>
<comment type="subunit">
    <text evidence="1">Forms a heterodimer with timeless (TIM); the complex then translocates into the nucleus.</text>
</comment>
<comment type="subcellular location">
    <subcellularLocation>
        <location evidence="1">Nucleus</location>
    </subcellularLocation>
    <subcellularLocation>
        <location evidence="1">Cytoplasm</location>
        <location evidence="1">Perinuclear region</location>
    </subcellularLocation>
    <text evidence="1">Nuclear at specific periods of the day. First accumulates in the perinuclear region about one hour before translocation into the nucleus. Interaction with Tim is required for nuclear localization (By similarity).</text>
</comment>
<comment type="PTM">
    <text evidence="1">Phosphorylated with a circadian rhythmicity, probably by the double-time protein (dbt). Phosphorylation could be implicated in the stability of per monomer and in the formation of heterodimer per-tim (By similarity).</text>
</comment>
<protein>
    <recommendedName>
        <fullName>Period circadian protein</fullName>
    </recommendedName>
</protein>
<organism>
    <name type="scientific">Drosophila pavlovskiana</name>
    <name type="common">Fruit fly</name>
    <dbReference type="NCBI Taxonomy" id="46795"/>
    <lineage>
        <taxon>Eukaryota</taxon>
        <taxon>Metazoa</taxon>
        <taxon>Ecdysozoa</taxon>
        <taxon>Arthropoda</taxon>
        <taxon>Hexapoda</taxon>
        <taxon>Insecta</taxon>
        <taxon>Pterygota</taxon>
        <taxon>Neoptera</taxon>
        <taxon>Endopterygota</taxon>
        <taxon>Diptera</taxon>
        <taxon>Brachycera</taxon>
        <taxon>Muscomorpha</taxon>
        <taxon>Ephydroidea</taxon>
        <taxon>Drosophilidae</taxon>
        <taxon>Drosophila</taxon>
        <taxon>Sophophora</taxon>
    </lineage>
</organism>
<dbReference type="EMBL" id="U51086">
    <property type="protein sequence ID" value="AAB41393.1"/>
    <property type="molecule type" value="Genomic_DNA"/>
</dbReference>
<dbReference type="SMR" id="P91698"/>
<dbReference type="GO" id="GO:0005634">
    <property type="term" value="C:nucleus"/>
    <property type="evidence" value="ECO:0007669"/>
    <property type="project" value="UniProtKB-SubCell"/>
</dbReference>
<dbReference type="GO" id="GO:0048471">
    <property type="term" value="C:perinuclear region of cytoplasm"/>
    <property type="evidence" value="ECO:0007669"/>
    <property type="project" value="UniProtKB-SubCell"/>
</dbReference>
<dbReference type="GO" id="GO:0000976">
    <property type="term" value="F:transcription cis-regulatory region binding"/>
    <property type="evidence" value="ECO:0007669"/>
    <property type="project" value="TreeGrafter"/>
</dbReference>
<dbReference type="GO" id="GO:0001222">
    <property type="term" value="F:transcription corepressor binding"/>
    <property type="evidence" value="ECO:0007669"/>
    <property type="project" value="TreeGrafter"/>
</dbReference>
<dbReference type="GO" id="GO:0032922">
    <property type="term" value="P:circadian regulation of gene expression"/>
    <property type="evidence" value="ECO:0007669"/>
    <property type="project" value="TreeGrafter"/>
</dbReference>
<dbReference type="GO" id="GO:0043153">
    <property type="term" value="P:entrainment of circadian clock by photoperiod"/>
    <property type="evidence" value="ECO:0007669"/>
    <property type="project" value="TreeGrafter"/>
</dbReference>
<dbReference type="GO" id="GO:0000122">
    <property type="term" value="P:negative regulation of transcription by RNA polymerase II"/>
    <property type="evidence" value="ECO:0007669"/>
    <property type="project" value="TreeGrafter"/>
</dbReference>
<dbReference type="InterPro" id="IPR050760">
    <property type="entry name" value="Period_circadian_regulator"/>
</dbReference>
<dbReference type="PANTHER" id="PTHR11269">
    <property type="entry name" value="PERIOD CIRCADIAN PROTEIN"/>
    <property type="match status" value="1"/>
</dbReference>
<dbReference type="PANTHER" id="PTHR11269:SF16">
    <property type="entry name" value="PERIOD CIRCADIAN PROTEIN"/>
    <property type="match status" value="1"/>
</dbReference>
<gene>
    <name type="primary">per</name>
</gene>
<sequence>SSTETPPSYNQLNYNENLLRFFNSKPVTAPVELDPPKVESSYVSSARGEDARSTLSPVQGFEGSGGSGSSGNFTTGSNLHMSSVTNTSNAGTGTSGTGNSGDGGGGGGANGTGSGAAPPVTLTESLLNKHNDEMEKFMLKKHRESRGRSGEKNKKSANEAMKMLEYSGPGPGHGHGIKRGGSHSWEGEANKPKQQLTLNTSGGGGGVGVGGGMPLFLDITHASSSSQNKGLAGVGVGGAGGVVGGGGSGTGLGGNGNVGSGNGNNNQPSTNQYTQSRLPCTQNINLWPPFSVGITTPTSVLSSHTAVPPSSFSPQHSLFPTFYYIPASIAASSPSSTNTNPNRPHKHAHVHNSSEKPSTSQAAAATMPLQYMTGVMYPHPSLFYTHPAAAAATAMV</sequence>
<keyword id="KW-0090">Biological rhythms</keyword>
<keyword id="KW-0963">Cytoplasm</keyword>
<keyword id="KW-0539">Nucleus</keyword>
<keyword id="KW-0597">Phosphoprotein</keyword>
<keyword id="KW-0677">Repeat</keyword>
<accession>P91698</accession>
<evidence type="ECO:0000250" key="1"/>
<evidence type="ECO:0000256" key="2">
    <source>
        <dbReference type="SAM" id="MobiDB-lite"/>
    </source>
</evidence>